<gene>
    <name evidence="1" type="primary">rpsQ</name>
    <name type="ordered locus">FTH_0240</name>
</gene>
<accession>Q0BNR8</accession>
<evidence type="ECO:0000255" key="1">
    <source>
        <dbReference type="HAMAP-Rule" id="MF_01345"/>
    </source>
</evidence>
<evidence type="ECO:0000305" key="2"/>
<reference key="1">
    <citation type="journal article" date="2006" name="J. Bacteriol.">
        <title>Chromosome rearrangement and diversification of Francisella tularensis revealed by the type B (OSU18) genome sequence.</title>
        <authorList>
            <person name="Petrosino J.F."/>
            <person name="Xiang Q."/>
            <person name="Karpathy S.E."/>
            <person name="Jiang H."/>
            <person name="Yerrapragada S."/>
            <person name="Liu Y."/>
            <person name="Gioia J."/>
            <person name="Hemphill L."/>
            <person name="Gonzalez A."/>
            <person name="Raghavan T.M."/>
            <person name="Uzman A."/>
            <person name="Fox G.E."/>
            <person name="Highlander S."/>
            <person name="Reichard M."/>
            <person name="Morton R.J."/>
            <person name="Clinkenbeard K.D."/>
            <person name="Weinstock G.M."/>
        </authorList>
    </citation>
    <scope>NUCLEOTIDE SEQUENCE [LARGE SCALE GENOMIC DNA]</scope>
    <source>
        <strain>OSU18</strain>
    </source>
</reference>
<protein>
    <recommendedName>
        <fullName evidence="1">Small ribosomal subunit protein uS17</fullName>
    </recommendedName>
    <alternativeName>
        <fullName evidence="2">30S ribosomal protein S17</fullName>
    </alternativeName>
</protein>
<sequence>MSDKTRLLEGKVSSVAMDKTVVVRAERYVKHPLYGKFVKKTTKYYVHDENNECKEGDVIKFKETRPYSKTKKWCLVDIIHREK</sequence>
<keyword id="KW-0687">Ribonucleoprotein</keyword>
<keyword id="KW-0689">Ribosomal protein</keyword>
<keyword id="KW-0694">RNA-binding</keyword>
<keyword id="KW-0699">rRNA-binding</keyword>
<feature type="chain" id="PRO_1000054955" description="Small ribosomal subunit protein uS17">
    <location>
        <begin position="1"/>
        <end position="83"/>
    </location>
</feature>
<comment type="function">
    <text evidence="1">One of the primary rRNA binding proteins, it binds specifically to the 5'-end of 16S ribosomal RNA.</text>
</comment>
<comment type="subunit">
    <text evidence="1">Part of the 30S ribosomal subunit.</text>
</comment>
<comment type="similarity">
    <text evidence="1">Belongs to the universal ribosomal protein uS17 family.</text>
</comment>
<proteinExistence type="inferred from homology"/>
<name>RS17_FRATO</name>
<organism>
    <name type="scientific">Francisella tularensis subsp. holarctica (strain OSU18)</name>
    <dbReference type="NCBI Taxonomy" id="393011"/>
    <lineage>
        <taxon>Bacteria</taxon>
        <taxon>Pseudomonadati</taxon>
        <taxon>Pseudomonadota</taxon>
        <taxon>Gammaproteobacteria</taxon>
        <taxon>Thiotrichales</taxon>
        <taxon>Francisellaceae</taxon>
        <taxon>Francisella</taxon>
    </lineage>
</organism>
<dbReference type="EMBL" id="CP000437">
    <property type="protein sequence ID" value="ABI82266.1"/>
    <property type="molecule type" value="Genomic_DNA"/>
</dbReference>
<dbReference type="RefSeq" id="WP_010030776.1">
    <property type="nucleotide sequence ID" value="NC_017463.1"/>
</dbReference>
<dbReference type="SMR" id="Q0BNR8"/>
<dbReference type="KEGG" id="fth:FTH_0240"/>
<dbReference type="GO" id="GO:0022627">
    <property type="term" value="C:cytosolic small ribosomal subunit"/>
    <property type="evidence" value="ECO:0007669"/>
    <property type="project" value="TreeGrafter"/>
</dbReference>
<dbReference type="GO" id="GO:0019843">
    <property type="term" value="F:rRNA binding"/>
    <property type="evidence" value="ECO:0007669"/>
    <property type="project" value="UniProtKB-UniRule"/>
</dbReference>
<dbReference type="GO" id="GO:0003735">
    <property type="term" value="F:structural constituent of ribosome"/>
    <property type="evidence" value="ECO:0007669"/>
    <property type="project" value="InterPro"/>
</dbReference>
<dbReference type="GO" id="GO:0006412">
    <property type="term" value="P:translation"/>
    <property type="evidence" value="ECO:0007669"/>
    <property type="project" value="UniProtKB-UniRule"/>
</dbReference>
<dbReference type="CDD" id="cd00364">
    <property type="entry name" value="Ribosomal_uS17"/>
    <property type="match status" value="1"/>
</dbReference>
<dbReference type="Gene3D" id="2.40.50.140">
    <property type="entry name" value="Nucleic acid-binding proteins"/>
    <property type="match status" value="1"/>
</dbReference>
<dbReference type="HAMAP" id="MF_01345_B">
    <property type="entry name" value="Ribosomal_uS17_B"/>
    <property type="match status" value="1"/>
</dbReference>
<dbReference type="InterPro" id="IPR012340">
    <property type="entry name" value="NA-bd_OB-fold"/>
</dbReference>
<dbReference type="InterPro" id="IPR000266">
    <property type="entry name" value="Ribosomal_uS17"/>
</dbReference>
<dbReference type="InterPro" id="IPR019984">
    <property type="entry name" value="Ribosomal_uS17_bact/chlr"/>
</dbReference>
<dbReference type="NCBIfam" id="NF004123">
    <property type="entry name" value="PRK05610.1"/>
    <property type="match status" value="1"/>
</dbReference>
<dbReference type="NCBIfam" id="TIGR03635">
    <property type="entry name" value="uS17_bact"/>
    <property type="match status" value="1"/>
</dbReference>
<dbReference type="PANTHER" id="PTHR10744">
    <property type="entry name" value="40S RIBOSOMAL PROTEIN S11 FAMILY MEMBER"/>
    <property type="match status" value="1"/>
</dbReference>
<dbReference type="PANTHER" id="PTHR10744:SF1">
    <property type="entry name" value="SMALL RIBOSOMAL SUBUNIT PROTEIN US17M"/>
    <property type="match status" value="1"/>
</dbReference>
<dbReference type="Pfam" id="PF00366">
    <property type="entry name" value="Ribosomal_S17"/>
    <property type="match status" value="1"/>
</dbReference>
<dbReference type="PRINTS" id="PR00973">
    <property type="entry name" value="RIBOSOMALS17"/>
</dbReference>
<dbReference type="SUPFAM" id="SSF50249">
    <property type="entry name" value="Nucleic acid-binding proteins"/>
    <property type="match status" value="1"/>
</dbReference>